<sequence length="31" mass="3442">MLTITSYFGFLLAALTLTLALFIGLNKIRLI</sequence>
<protein>
    <recommendedName>
        <fullName>Cytochrome b6-f complex subunit 6</fullName>
    </recommendedName>
    <alternativeName>
        <fullName>Cytochrome b6-f complex subunit PetL</fullName>
    </alternativeName>
    <alternativeName>
        <fullName>Cytochrome b6-f complex subunit VI</fullName>
    </alternativeName>
</protein>
<feature type="chain" id="PRO_0000289024" description="Cytochrome b6-f complex subunit 6">
    <location>
        <begin position="1"/>
        <end position="31"/>
    </location>
</feature>
<feature type="transmembrane region" description="Helical" evidence="2">
    <location>
        <begin position="4"/>
        <end position="24"/>
    </location>
</feature>
<name>PETL_ORYSA</name>
<keyword id="KW-0150">Chloroplast</keyword>
<keyword id="KW-0249">Electron transport</keyword>
<keyword id="KW-0472">Membrane</keyword>
<keyword id="KW-0602">Photosynthesis</keyword>
<keyword id="KW-0934">Plastid</keyword>
<keyword id="KW-0793">Thylakoid</keyword>
<keyword id="KW-0812">Transmembrane</keyword>
<keyword id="KW-1133">Transmembrane helix</keyword>
<keyword id="KW-0813">Transport</keyword>
<reference key="1">
    <citation type="journal article" date="2004" name="Plant Physiol.">
        <title>A comparison of rice chloroplast genomes.</title>
        <authorList>
            <person name="Tang J."/>
            <person name="Xia H."/>
            <person name="Cao M."/>
            <person name="Zhang X."/>
            <person name="Zeng W."/>
            <person name="Hu S."/>
            <person name="Tong W."/>
            <person name="Wang J."/>
            <person name="Wang J."/>
            <person name="Yu J."/>
            <person name="Yang H."/>
            <person name="Zhu L."/>
        </authorList>
    </citation>
    <scope>NUCLEOTIDE SEQUENCE [LARGE SCALE GENOMIC DNA]</scope>
    <source>
        <strain>cv. PA64s</strain>
    </source>
</reference>
<organism>
    <name type="scientific">Oryza sativa</name>
    <name type="common">Rice</name>
    <dbReference type="NCBI Taxonomy" id="4530"/>
    <lineage>
        <taxon>Eukaryota</taxon>
        <taxon>Viridiplantae</taxon>
        <taxon>Streptophyta</taxon>
        <taxon>Embryophyta</taxon>
        <taxon>Tracheophyta</taxon>
        <taxon>Spermatophyta</taxon>
        <taxon>Magnoliopsida</taxon>
        <taxon>Liliopsida</taxon>
        <taxon>Poales</taxon>
        <taxon>Poaceae</taxon>
        <taxon>BOP clade</taxon>
        <taxon>Oryzoideae</taxon>
        <taxon>Oryzeae</taxon>
        <taxon>Oryzinae</taxon>
        <taxon>Oryza</taxon>
    </lineage>
</organism>
<comment type="function">
    <text evidence="1">Component of the cytochrome b6-f complex, which mediates electron transfer between photosystem II (PSII) and photosystem I (PSI), cyclic electron flow around PSI, and state transitions. PetL is important for photoautotrophic growth as well as for electron transfer efficiency and stability of the cytochrome b6-f complex (By similarity).</text>
</comment>
<comment type="subunit">
    <text evidence="1">The 4 large subunits of the cytochrome b6-f complex are cytochrome b6, subunit IV (17 kDa polypeptide, PetD), cytochrome f and the Rieske protein, while the 4 small subunits are PetG, PetL, PetM and PetN. The complex functions as a dimer (By similarity).</text>
</comment>
<comment type="subcellular location">
    <subcellularLocation>
        <location evidence="1">Plastid</location>
        <location evidence="1">Chloroplast thylakoid membrane</location>
        <topology evidence="1">Single-pass membrane protein</topology>
    </subcellularLocation>
</comment>
<comment type="similarity">
    <text evidence="3">Belongs to the PetL family.</text>
</comment>
<geneLocation type="chloroplast"/>
<proteinExistence type="inferred from homology"/>
<evidence type="ECO:0000250" key="1"/>
<evidence type="ECO:0000255" key="2"/>
<evidence type="ECO:0000305" key="3"/>
<gene>
    <name type="primary">petL</name>
</gene>
<dbReference type="EMBL" id="AY522331">
    <property type="status" value="NOT_ANNOTATED_CDS"/>
    <property type="molecule type" value="Genomic_DNA"/>
</dbReference>
<dbReference type="RefSeq" id="YP_009305322.1">
    <property type="nucleotide sequence ID" value="NC_031333.1"/>
</dbReference>
<dbReference type="SMR" id="P0C393"/>
<dbReference type="GeneID" id="29141388"/>
<dbReference type="GO" id="GO:0009535">
    <property type="term" value="C:chloroplast thylakoid membrane"/>
    <property type="evidence" value="ECO:0007669"/>
    <property type="project" value="UniProtKB-SubCell"/>
</dbReference>
<dbReference type="GO" id="GO:0009512">
    <property type="term" value="C:cytochrome b6f complex"/>
    <property type="evidence" value="ECO:0007669"/>
    <property type="project" value="InterPro"/>
</dbReference>
<dbReference type="GO" id="GO:0009536">
    <property type="term" value="C:plastid"/>
    <property type="evidence" value="ECO:0000305"/>
    <property type="project" value="Gramene"/>
</dbReference>
<dbReference type="GO" id="GO:0045158">
    <property type="term" value="F:electron transporter, transferring electrons within cytochrome b6/f complex of photosystem II activity"/>
    <property type="evidence" value="ECO:0007669"/>
    <property type="project" value="UniProtKB-UniRule"/>
</dbReference>
<dbReference type="GO" id="GO:0015979">
    <property type="term" value="P:photosynthesis"/>
    <property type="evidence" value="ECO:0007669"/>
    <property type="project" value="UniProtKB-KW"/>
</dbReference>
<dbReference type="HAMAP" id="MF_00433">
    <property type="entry name" value="Cytb6_f_PetL"/>
    <property type="match status" value="1"/>
</dbReference>
<dbReference type="InterPro" id="IPR007802">
    <property type="entry name" value="Cyt_b6/f_cplx_su6"/>
</dbReference>
<dbReference type="PANTHER" id="PTHR37266">
    <property type="entry name" value="CYTOCHROME B6-F COMPLEX SUBUNIT 6"/>
    <property type="match status" value="1"/>
</dbReference>
<dbReference type="PANTHER" id="PTHR37266:SF1">
    <property type="entry name" value="CYTOCHROME B6-F COMPLEX SUBUNIT 6"/>
    <property type="match status" value="1"/>
</dbReference>
<dbReference type="Pfam" id="PF05115">
    <property type="entry name" value="PetL"/>
    <property type="match status" value="1"/>
</dbReference>
<dbReference type="SUPFAM" id="SSF103436">
    <property type="entry name" value="PetL subunit of the cytochrome b6f complex"/>
    <property type="match status" value="1"/>
</dbReference>
<accession>P0C393</accession>